<evidence type="ECO:0000255" key="1"/>
<evidence type="ECO:0000255" key="2">
    <source>
        <dbReference type="HAMAP-Rule" id="MF_01036"/>
    </source>
</evidence>
<keyword id="KW-0963">Cytoplasm</keyword>
<keyword id="KW-0269">Exonuclease</keyword>
<keyword id="KW-0378">Hydrolase</keyword>
<keyword id="KW-0540">Nuclease</keyword>
<keyword id="KW-0694">RNA-binding</keyword>
<sequence>MFQDNPLLAQLKQQLHSQTPRAEGVVKATEKGFGFLEVDAQKSYFIPPPQMKKVMHGDRIVAVIHTEKERESAEPEELIEPFLTRFVGKVQGKNDRLSIVPDHPLLKDAIPCRAARGVQHEFKEGDWAVAEMRRHPLKGDRSFYADLTQYITFADDHFVPWWVTLARHNLEKEAPNGVATEMLDEGLERQDLTALNFVTIDSASTEDMDDALYAEELADGRLQLTVAIADPTAWIAEGSKLDNAAKIRAFTNYLPGFNIPMLPRELSDDLCSLRANEVRPALACRMIISADGTIDDDIAFFAATIESKAKLAYDNVSDWLENNGTWQPDNEGIAQQIRLLHRICLSRSEWRHHHALVFKDRPDYRFVLGEKGEVLDIVAEPRRIANRIVEESMIAANLCAARVLRDKLGFGIYNVHTGFDPANADALAALLKTHGLHVDAEEVLTLEGFCKLRRELDAQPSGFLDSRIRRFQSFAEISTEPGPHFGLGLEAYATWTSPIRKYGDMINHRLLKAVIKGEAIARPQEDITQQMAERRRLNRMAERDVGDWLYARFLNDKAGTNTRFAAEIIDVSRGGMRVRLVDNGAIAFIPAPFLHAVRDELVCSQENGTVQIKGETVYKVTDVIDVTIAEVRMETRSIIARPAA</sequence>
<accession>B5FU93</accession>
<organism>
    <name type="scientific">Salmonella dublin (strain CT_02021853)</name>
    <dbReference type="NCBI Taxonomy" id="439851"/>
    <lineage>
        <taxon>Bacteria</taxon>
        <taxon>Pseudomonadati</taxon>
        <taxon>Pseudomonadota</taxon>
        <taxon>Gammaproteobacteria</taxon>
        <taxon>Enterobacterales</taxon>
        <taxon>Enterobacteriaceae</taxon>
        <taxon>Salmonella</taxon>
    </lineage>
</organism>
<protein>
    <recommendedName>
        <fullName evidence="2">Exoribonuclease 2</fullName>
        <ecNumber evidence="2">3.1.13.1</ecNumber>
    </recommendedName>
    <alternativeName>
        <fullName evidence="2">Exoribonuclease II</fullName>
        <shortName evidence="2">RNase II</shortName>
        <shortName evidence="2">Ribonuclease II</shortName>
    </alternativeName>
</protein>
<reference key="1">
    <citation type="journal article" date="2011" name="J. Bacteriol.">
        <title>Comparative genomics of 28 Salmonella enterica isolates: evidence for CRISPR-mediated adaptive sublineage evolution.</title>
        <authorList>
            <person name="Fricke W.F."/>
            <person name="Mammel M.K."/>
            <person name="McDermott P.F."/>
            <person name="Tartera C."/>
            <person name="White D.G."/>
            <person name="Leclerc J.E."/>
            <person name="Ravel J."/>
            <person name="Cebula T.A."/>
        </authorList>
    </citation>
    <scope>NUCLEOTIDE SEQUENCE [LARGE SCALE GENOMIC DNA]</scope>
    <source>
        <strain>CT_02021853</strain>
    </source>
</reference>
<proteinExistence type="inferred from homology"/>
<dbReference type="EC" id="3.1.13.1" evidence="2"/>
<dbReference type="EMBL" id="CP001144">
    <property type="protein sequence ID" value="ACH75778.1"/>
    <property type="molecule type" value="Genomic_DNA"/>
</dbReference>
<dbReference type="RefSeq" id="WP_000485050.1">
    <property type="nucleotide sequence ID" value="NC_011205.1"/>
</dbReference>
<dbReference type="SMR" id="B5FU93"/>
<dbReference type="KEGG" id="sed:SeD_A1630"/>
<dbReference type="HOGENOM" id="CLU_002333_7_3_6"/>
<dbReference type="Proteomes" id="UP000008322">
    <property type="component" value="Chromosome"/>
</dbReference>
<dbReference type="GO" id="GO:0005829">
    <property type="term" value="C:cytosol"/>
    <property type="evidence" value="ECO:0007669"/>
    <property type="project" value="UniProtKB-ARBA"/>
</dbReference>
<dbReference type="GO" id="GO:0008859">
    <property type="term" value="F:exoribonuclease II activity"/>
    <property type="evidence" value="ECO:0007669"/>
    <property type="project" value="UniProtKB-UniRule"/>
</dbReference>
<dbReference type="GO" id="GO:0003723">
    <property type="term" value="F:RNA binding"/>
    <property type="evidence" value="ECO:0007669"/>
    <property type="project" value="UniProtKB-KW"/>
</dbReference>
<dbReference type="GO" id="GO:0006402">
    <property type="term" value="P:mRNA catabolic process"/>
    <property type="evidence" value="ECO:0007669"/>
    <property type="project" value="UniProtKB-UniRule"/>
</dbReference>
<dbReference type="FunFam" id="2.40.50.140:FF:000079">
    <property type="entry name" value="Exoribonuclease 2"/>
    <property type="match status" value="1"/>
</dbReference>
<dbReference type="FunFam" id="2.40.50.140:FF:000081">
    <property type="entry name" value="Exoribonuclease 2"/>
    <property type="match status" value="1"/>
</dbReference>
<dbReference type="FunFam" id="2.40.50.640:FF:000001">
    <property type="entry name" value="Exoribonuclease 2"/>
    <property type="match status" value="1"/>
</dbReference>
<dbReference type="Gene3D" id="2.40.50.640">
    <property type="match status" value="1"/>
</dbReference>
<dbReference type="Gene3D" id="2.40.50.140">
    <property type="entry name" value="Nucleic acid-binding proteins"/>
    <property type="match status" value="2"/>
</dbReference>
<dbReference type="HAMAP" id="MF_01036">
    <property type="entry name" value="RNase_II"/>
    <property type="match status" value="1"/>
</dbReference>
<dbReference type="InterPro" id="IPR011129">
    <property type="entry name" value="CSD"/>
</dbReference>
<dbReference type="InterPro" id="IPR012340">
    <property type="entry name" value="NA-bd_OB-fold"/>
</dbReference>
<dbReference type="InterPro" id="IPR013223">
    <property type="entry name" value="RNase_B_OB_dom"/>
</dbReference>
<dbReference type="InterPro" id="IPR011804">
    <property type="entry name" value="RNase_II"/>
</dbReference>
<dbReference type="InterPro" id="IPR001900">
    <property type="entry name" value="RNase_II/R"/>
</dbReference>
<dbReference type="InterPro" id="IPR022966">
    <property type="entry name" value="RNase_II/R_CS"/>
</dbReference>
<dbReference type="InterPro" id="IPR004476">
    <property type="entry name" value="RNase_II/RNase_R"/>
</dbReference>
<dbReference type="InterPro" id="IPR050180">
    <property type="entry name" value="RNR_Ribonuclease"/>
</dbReference>
<dbReference type="InterPro" id="IPR003029">
    <property type="entry name" value="S1_domain"/>
</dbReference>
<dbReference type="NCBIfam" id="TIGR00358">
    <property type="entry name" value="3_prime_RNase"/>
    <property type="match status" value="1"/>
</dbReference>
<dbReference type="NCBIfam" id="NF003455">
    <property type="entry name" value="PRK05054.1"/>
    <property type="match status" value="1"/>
</dbReference>
<dbReference type="NCBIfam" id="TIGR02062">
    <property type="entry name" value="RNase_B"/>
    <property type="match status" value="1"/>
</dbReference>
<dbReference type="PANTHER" id="PTHR23355:SF37">
    <property type="entry name" value="EXORIBONUCLEASE 2"/>
    <property type="match status" value="1"/>
</dbReference>
<dbReference type="PANTHER" id="PTHR23355">
    <property type="entry name" value="RIBONUCLEASE"/>
    <property type="match status" value="1"/>
</dbReference>
<dbReference type="Pfam" id="PF08206">
    <property type="entry name" value="OB_RNB"/>
    <property type="match status" value="1"/>
</dbReference>
<dbReference type="Pfam" id="PF00773">
    <property type="entry name" value="RNB"/>
    <property type="match status" value="1"/>
</dbReference>
<dbReference type="Pfam" id="PF00575">
    <property type="entry name" value="S1"/>
    <property type="match status" value="1"/>
</dbReference>
<dbReference type="SMART" id="SM00357">
    <property type="entry name" value="CSP"/>
    <property type="match status" value="1"/>
</dbReference>
<dbReference type="SMART" id="SM00955">
    <property type="entry name" value="RNB"/>
    <property type="match status" value="1"/>
</dbReference>
<dbReference type="SUPFAM" id="SSF50249">
    <property type="entry name" value="Nucleic acid-binding proteins"/>
    <property type="match status" value="4"/>
</dbReference>
<dbReference type="PROSITE" id="PS01175">
    <property type="entry name" value="RIBONUCLEASE_II"/>
    <property type="match status" value="1"/>
</dbReference>
<name>RNB_SALDC</name>
<comment type="function">
    <text evidence="2">Involved in mRNA degradation. Hydrolyzes single-stranded polyribonucleotides processively in the 3' to 5' direction.</text>
</comment>
<comment type="catalytic activity">
    <reaction evidence="2">
        <text>Exonucleolytic cleavage in the 3'- to 5'-direction to yield nucleoside 5'-phosphates.</text>
        <dbReference type="EC" id="3.1.13.1"/>
    </reaction>
</comment>
<comment type="subcellular location">
    <subcellularLocation>
        <location evidence="2">Cytoplasm</location>
    </subcellularLocation>
</comment>
<comment type="similarity">
    <text evidence="2">Belongs to the RNR ribonuclease family. RNase II subfamily.</text>
</comment>
<feature type="chain" id="PRO_1000135874" description="Exoribonuclease 2">
    <location>
        <begin position="1"/>
        <end position="644"/>
    </location>
</feature>
<feature type="domain" description="RNB" evidence="1">
    <location>
        <begin position="189"/>
        <end position="516"/>
    </location>
</feature>
<feature type="domain" description="S1 motif" evidence="2">
    <location>
        <begin position="561"/>
        <end position="643"/>
    </location>
</feature>
<gene>
    <name evidence="2" type="primary">rnb</name>
    <name type="ordered locus">SeD_A1630</name>
</gene>